<comment type="function">
    <text evidence="1">Catalyzes the transfer of the diacylglyceryl group from phosphatidylglycerol to the sulfhydryl group of the N-terminal cysteine of a prolipoprotein, the first step in the formation of mature lipoproteins.</text>
</comment>
<comment type="catalytic activity">
    <reaction evidence="1">
        <text>L-cysteinyl-[prolipoprotein] + a 1,2-diacyl-sn-glycero-3-phospho-(1'-sn-glycerol) = an S-1,2-diacyl-sn-glyceryl-L-cysteinyl-[prolipoprotein] + sn-glycerol 1-phosphate + H(+)</text>
        <dbReference type="Rhea" id="RHEA:56712"/>
        <dbReference type="Rhea" id="RHEA-COMP:14679"/>
        <dbReference type="Rhea" id="RHEA-COMP:14680"/>
        <dbReference type="ChEBI" id="CHEBI:15378"/>
        <dbReference type="ChEBI" id="CHEBI:29950"/>
        <dbReference type="ChEBI" id="CHEBI:57685"/>
        <dbReference type="ChEBI" id="CHEBI:64716"/>
        <dbReference type="ChEBI" id="CHEBI:140658"/>
        <dbReference type="EC" id="2.5.1.145"/>
    </reaction>
</comment>
<comment type="pathway">
    <text evidence="1">Protein modification; lipoprotein biosynthesis (diacylglyceryl transfer).</text>
</comment>
<comment type="subcellular location">
    <subcellularLocation>
        <location evidence="1">Cell inner membrane</location>
        <topology evidence="1">Multi-pass membrane protein</topology>
    </subcellularLocation>
</comment>
<comment type="similarity">
    <text evidence="1">Belongs to the Lgt family.</text>
</comment>
<name>LGT_FRATF</name>
<proteinExistence type="inferred from homology"/>
<sequence length="268" mass="30549">MLQYPHINPVALQLGPIKIHWYGLMYLLGIFAGWYLTRYRAKVKPWAPIKPEQVGDLTFYVALGVILGGRIGYIIFYNLPYYFHNPSQMFFLWDGGMSFHGGFIGVLIAFALFARKIGANFFDLGEFVAPVIPIGLGAGRIGNFINGELLGKVTDSPLGMVFPTGGPLPRYPSQLFEFFFEGVVLFSVLWLVTIKKRPRYLVLGLFMFLYGYARFICEFFRQPDPQYGYIFFNWMTMGQILSIPMILLGAVILIAVFIKTRKNKCENI</sequence>
<protein>
    <recommendedName>
        <fullName evidence="1">Phosphatidylglycerol--prolipoprotein diacylglyceryl transferase</fullName>
        <ecNumber evidence="1">2.5.1.145</ecNumber>
    </recommendedName>
</protein>
<evidence type="ECO:0000255" key="1">
    <source>
        <dbReference type="HAMAP-Rule" id="MF_01147"/>
    </source>
</evidence>
<organism>
    <name type="scientific">Francisella tularensis subsp. holarctica (strain FTNF002-00 / FTA)</name>
    <dbReference type="NCBI Taxonomy" id="458234"/>
    <lineage>
        <taxon>Bacteria</taxon>
        <taxon>Pseudomonadati</taxon>
        <taxon>Pseudomonadota</taxon>
        <taxon>Gammaproteobacteria</taxon>
        <taxon>Thiotrichales</taxon>
        <taxon>Francisellaceae</taxon>
        <taxon>Francisella</taxon>
    </lineage>
</organism>
<gene>
    <name evidence="1" type="primary">lgt</name>
    <name type="ordered locus">FTA_0756</name>
</gene>
<reference key="1">
    <citation type="journal article" date="2009" name="PLoS ONE">
        <title>Complete genome sequence of Francisella tularensis subspecies holarctica FTNF002-00.</title>
        <authorList>
            <person name="Barabote R.D."/>
            <person name="Xie G."/>
            <person name="Brettin T.S."/>
            <person name="Hinrichs S.H."/>
            <person name="Fey P.D."/>
            <person name="Jay J.J."/>
            <person name="Engle J.L."/>
            <person name="Godbole S.D."/>
            <person name="Noronha J.M."/>
            <person name="Scheuermann R.H."/>
            <person name="Zhou L.W."/>
            <person name="Lion C."/>
            <person name="Dempsey M.P."/>
        </authorList>
    </citation>
    <scope>NUCLEOTIDE SEQUENCE [LARGE SCALE GENOMIC DNA]</scope>
    <source>
        <strain>FTNF002-00 / FTA</strain>
    </source>
</reference>
<feature type="chain" id="PRO_1000053432" description="Phosphatidylglycerol--prolipoprotein diacylglyceryl transferase">
    <location>
        <begin position="1"/>
        <end position="268"/>
    </location>
</feature>
<feature type="transmembrane region" description="Helical" evidence="1">
    <location>
        <begin position="14"/>
        <end position="34"/>
    </location>
</feature>
<feature type="transmembrane region" description="Helical" evidence="1">
    <location>
        <begin position="57"/>
        <end position="77"/>
    </location>
</feature>
<feature type="transmembrane region" description="Helical" evidence="1">
    <location>
        <begin position="90"/>
        <end position="110"/>
    </location>
</feature>
<feature type="transmembrane region" description="Helical" evidence="1">
    <location>
        <begin position="117"/>
        <end position="137"/>
    </location>
</feature>
<feature type="transmembrane region" description="Helical" evidence="1">
    <location>
        <begin position="174"/>
        <end position="194"/>
    </location>
</feature>
<feature type="transmembrane region" description="Helical" evidence="1">
    <location>
        <begin position="200"/>
        <end position="220"/>
    </location>
</feature>
<feature type="transmembrane region" description="Helical" evidence="1">
    <location>
        <begin position="238"/>
        <end position="258"/>
    </location>
</feature>
<feature type="binding site" evidence="1">
    <location>
        <position position="140"/>
    </location>
    <ligand>
        <name>a 1,2-diacyl-sn-glycero-3-phospho-(1'-sn-glycerol)</name>
        <dbReference type="ChEBI" id="CHEBI:64716"/>
    </ligand>
</feature>
<accession>A7NB79</accession>
<keyword id="KW-0997">Cell inner membrane</keyword>
<keyword id="KW-1003">Cell membrane</keyword>
<keyword id="KW-0472">Membrane</keyword>
<keyword id="KW-0808">Transferase</keyword>
<keyword id="KW-0812">Transmembrane</keyword>
<keyword id="KW-1133">Transmembrane helix</keyword>
<dbReference type="EC" id="2.5.1.145" evidence="1"/>
<dbReference type="EMBL" id="CP000803">
    <property type="protein sequence ID" value="ABU61232.1"/>
    <property type="molecule type" value="Genomic_DNA"/>
</dbReference>
<dbReference type="RefSeq" id="WP_010032772.1">
    <property type="nucleotide sequence ID" value="NC_009749.1"/>
</dbReference>
<dbReference type="SMR" id="A7NB79"/>
<dbReference type="KEGG" id="fta:FTA_0756"/>
<dbReference type="HOGENOM" id="CLU_013386_1_0_6"/>
<dbReference type="UniPathway" id="UPA00664"/>
<dbReference type="GO" id="GO:0005886">
    <property type="term" value="C:plasma membrane"/>
    <property type="evidence" value="ECO:0007669"/>
    <property type="project" value="UniProtKB-SubCell"/>
</dbReference>
<dbReference type="GO" id="GO:0008961">
    <property type="term" value="F:phosphatidylglycerol-prolipoprotein diacylglyceryl transferase activity"/>
    <property type="evidence" value="ECO:0007669"/>
    <property type="project" value="UniProtKB-UniRule"/>
</dbReference>
<dbReference type="GO" id="GO:0042158">
    <property type="term" value="P:lipoprotein biosynthetic process"/>
    <property type="evidence" value="ECO:0007669"/>
    <property type="project" value="UniProtKB-UniRule"/>
</dbReference>
<dbReference type="HAMAP" id="MF_01147">
    <property type="entry name" value="Lgt"/>
    <property type="match status" value="1"/>
</dbReference>
<dbReference type="InterPro" id="IPR001640">
    <property type="entry name" value="Lgt"/>
</dbReference>
<dbReference type="NCBIfam" id="TIGR00544">
    <property type="entry name" value="lgt"/>
    <property type="match status" value="1"/>
</dbReference>
<dbReference type="PANTHER" id="PTHR30589:SF0">
    <property type="entry name" value="PHOSPHATIDYLGLYCEROL--PROLIPOPROTEIN DIACYLGLYCERYL TRANSFERASE"/>
    <property type="match status" value="1"/>
</dbReference>
<dbReference type="PANTHER" id="PTHR30589">
    <property type="entry name" value="PROLIPOPROTEIN DIACYLGLYCERYL TRANSFERASE"/>
    <property type="match status" value="1"/>
</dbReference>
<dbReference type="Pfam" id="PF01790">
    <property type="entry name" value="LGT"/>
    <property type="match status" value="1"/>
</dbReference>
<dbReference type="PROSITE" id="PS01311">
    <property type="entry name" value="LGT"/>
    <property type="match status" value="1"/>
</dbReference>